<keyword id="KW-0001">2Fe-2S</keyword>
<keyword id="KW-0028">Amino-acid biosynthesis</keyword>
<keyword id="KW-0100">Branched-chain amino acid biosynthesis</keyword>
<keyword id="KW-0408">Iron</keyword>
<keyword id="KW-0411">Iron-sulfur</keyword>
<keyword id="KW-0456">Lyase</keyword>
<keyword id="KW-0460">Magnesium</keyword>
<keyword id="KW-0479">Metal-binding</keyword>
<keyword id="KW-1185">Reference proteome</keyword>
<accession>B4SDK2</accession>
<feature type="chain" id="PRO_1000089397" description="Dihydroxy-acid dehydratase">
    <location>
        <begin position="1"/>
        <end position="565"/>
    </location>
</feature>
<feature type="active site" description="Proton acceptor" evidence="1">
    <location>
        <position position="473"/>
    </location>
</feature>
<feature type="binding site" evidence="1">
    <location>
        <position position="80"/>
    </location>
    <ligand>
        <name>Mg(2+)</name>
        <dbReference type="ChEBI" id="CHEBI:18420"/>
    </ligand>
</feature>
<feature type="binding site" evidence="1">
    <location>
        <position position="121"/>
    </location>
    <ligand>
        <name>[2Fe-2S] cluster</name>
        <dbReference type="ChEBI" id="CHEBI:190135"/>
    </ligand>
</feature>
<feature type="binding site" evidence="1">
    <location>
        <position position="122"/>
    </location>
    <ligand>
        <name>Mg(2+)</name>
        <dbReference type="ChEBI" id="CHEBI:18420"/>
    </ligand>
</feature>
<feature type="binding site" description="via carbamate group" evidence="1">
    <location>
        <position position="123"/>
    </location>
    <ligand>
        <name>Mg(2+)</name>
        <dbReference type="ChEBI" id="CHEBI:18420"/>
    </ligand>
</feature>
<feature type="binding site" evidence="1">
    <location>
        <position position="194"/>
    </location>
    <ligand>
        <name>[2Fe-2S] cluster</name>
        <dbReference type="ChEBI" id="CHEBI:190135"/>
    </ligand>
</feature>
<feature type="binding site" evidence="1">
    <location>
        <position position="447"/>
    </location>
    <ligand>
        <name>Mg(2+)</name>
        <dbReference type="ChEBI" id="CHEBI:18420"/>
    </ligand>
</feature>
<feature type="modified residue" description="N6-carboxylysine" evidence="1">
    <location>
        <position position="123"/>
    </location>
</feature>
<evidence type="ECO:0000255" key="1">
    <source>
        <dbReference type="HAMAP-Rule" id="MF_00012"/>
    </source>
</evidence>
<protein>
    <recommendedName>
        <fullName evidence="1">Dihydroxy-acid dehydratase</fullName>
        <shortName evidence="1">DAD</shortName>
        <ecNumber evidence="1">4.2.1.9</ecNumber>
    </recommendedName>
</protein>
<comment type="function">
    <text evidence="1">Functions in the biosynthesis of branched-chain amino acids. Catalyzes the dehydration of (2R,3R)-2,3-dihydroxy-3-methylpentanoate (2,3-dihydroxy-3-methylvalerate) into 2-oxo-3-methylpentanoate (2-oxo-3-methylvalerate) and of (2R)-2,3-dihydroxy-3-methylbutanoate (2,3-dihydroxyisovalerate) into 2-oxo-3-methylbutanoate (2-oxoisovalerate), the penultimate precursor to L-isoleucine and L-valine, respectively.</text>
</comment>
<comment type="catalytic activity">
    <reaction evidence="1">
        <text>(2R)-2,3-dihydroxy-3-methylbutanoate = 3-methyl-2-oxobutanoate + H2O</text>
        <dbReference type="Rhea" id="RHEA:24809"/>
        <dbReference type="ChEBI" id="CHEBI:11851"/>
        <dbReference type="ChEBI" id="CHEBI:15377"/>
        <dbReference type="ChEBI" id="CHEBI:49072"/>
        <dbReference type="EC" id="4.2.1.9"/>
    </reaction>
    <physiologicalReaction direction="left-to-right" evidence="1">
        <dbReference type="Rhea" id="RHEA:24810"/>
    </physiologicalReaction>
</comment>
<comment type="catalytic activity">
    <reaction evidence="1">
        <text>(2R,3R)-2,3-dihydroxy-3-methylpentanoate = (S)-3-methyl-2-oxopentanoate + H2O</text>
        <dbReference type="Rhea" id="RHEA:27694"/>
        <dbReference type="ChEBI" id="CHEBI:15377"/>
        <dbReference type="ChEBI" id="CHEBI:35146"/>
        <dbReference type="ChEBI" id="CHEBI:49258"/>
        <dbReference type="EC" id="4.2.1.9"/>
    </reaction>
    <physiologicalReaction direction="left-to-right" evidence="1">
        <dbReference type="Rhea" id="RHEA:27695"/>
    </physiologicalReaction>
</comment>
<comment type="cofactor">
    <cofactor evidence="1">
        <name>[2Fe-2S] cluster</name>
        <dbReference type="ChEBI" id="CHEBI:190135"/>
    </cofactor>
    <text evidence="1">Binds 1 [2Fe-2S] cluster per subunit. This cluster acts as a Lewis acid cofactor.</text>
</comment>
<comment type="cofactor">
    <cofactor evidence="1">
        <name>Mg(2+)</name>
        <dbReference type="ChEBI" id="CHEBI:18420"/>
    </cofactor>
</comment>
<comment type="pathway">
    <text evidence="1">Amino-acid biosynthesis; L-isoleucine biosynthesis; L-isoleucine from 2-oxobutanoate: step 3/4.</text>
</comment>
<comment type="pathway">
    <text evidence="1">Amino-acid biosynthesis; L-valine biosynthesis; L-valine from pyruvate: step 3/4.</text>
</comment>
<comment type="subunit">
    <text evidence="1">Homodimer.</text>
</comment>
<comment type="similarity">
    <text evidence="1">Belongs to the IlvD/Edd family.</text>
</comment>
<gene>
    <name evidence="1" type="primary">ilvD</name>
    <name type="ordered locus">Ppha_2167</name>
</gene>
<proteinExistence type="inferred from homology"/>
<sequence>MRSDTIKTGFEKAPHRSLLKATGSIVSNNDFKKPFIGICNSYNELIPGHSHLQELGRIAKEEVRKAGGVPFEFNTIGVCDGIAMGHIGMRYSLASRELIADSVETVAQAHCLDGLVCIPNCDKITPGMMMAALRINIPVIFVSGGPMKAGHTPSGQTVDLISVFEAVGQFSAGKIGNEELESIEESACPGCGSCSGMFTANSMNCLSEALGFALPGNGTILAIDPRRNELVREASRRIIDLVKKDIKPRDILSRNALLNAFALDFAMGGSTNTILHTLAIANEAELDFNFSELNALSAKTPYICKVSPATMAVHIEDVDRAGGVSAILHELSRIDGLLDLSTLTVTGKTLGENIADAEILDYTVIRSIDEPYSATGGLAVLFGNLAPQGAVVKTGAVAPEMMKHTGPAKIYDCQDDAIKGIMGDDVKAGDVVVIRYEGPKGGPGMPEMLSPTSAIMGRGLGESVALITDGRFSGGSRGACIGHISPEAAERGPIAALHNGDLITIDIPSRSISVNLTEETINERLAALKPFEPKIKKGYLARYAQMVTSANTGAILKNPVSCEPK</sequence>
<dbReference type="EC" id="4.2.1.9" evidence="1"/>
<dbReference type="EMBL" id="CP001110">
    <property type="protein sequence ID" value="ACF44370.1"/>
    <property type="molecule type" value="Genomic_DNA"/>
</dbReference>
<dbReference type="RefSeq" id="WP_012508847.1">
    <property type="nucleotide sequence ID" value="NC_011060.1"/>
</dbReference>
<dbReference type="SMR" id="B4SDK2"/>
<dbReference type="STRING" id="324925.Ppha_2167"/>
<dbReference type="KEGG" id="pph:Ppha_2167"/>
<dbReference type="eggNOG" id="COG0129">
    <property type="taxonomic scope" value="Bacteria"/>
</dbReference>
<dbReference type="HOGENOM" id="CLU_014271_4_2_10"/>
<dbReference type="OrthoDB" id="9807077at2"/>
<dbReference type="UniPathway" id="UPA00047">
    <property type="reaction ID" value="UER00057"/>
</dbReference>
<dbReference type="UniPathway" id="UPA00049">
    <property type="reaction ID" value="UER00061"/>
</dbReference>
<dbReference type="Proteomes" id="UP000002724">
    <property type="component" value="Chromosome"/>
</dbReference>
<dbReference type="GO" id="GO:0005829">
    <property type="term" value="C:cytosol"/>
    <property type="evidence" value="ECO:0007669"/>
    <property type="project" value="TreeGrafter"/>
</dbReference>
<dbReference type="GO" id="GO:0051537">
    <property type="term" value="F:2 iron, 2 sulfur cluster binding"/>
    <property type="evidence" value="ECO:0007669"/>
    <property type="project" value="UniProtKB-UniRule"/>
</dbReference>
<dbReference type="GO" id="GO:0004160">
    <property type="term" value="F:dihydroxy-acid dehydratase activity"/>
    <property type="evidence" value="ECO:0007669"/>
    <property type="project" value="UniProtKB-UniRule"/>
</dbReference>
<dbReference type="GO" id="GO:0000287">
    <property type="term" value="F:magnesium ion binding"/>
    <property type="evidence" value="ECO:0007669"/>
    <property type="project" value="UniProtKB-UniRule"/>
</dbReference>
<dbReference type="GO" id="GO:0009097">
    <property type="term" value="P:isoleucine biosynthetic process"/>
    <property type="evidence" value="ECO:0007669"/>
    <property type="project" value="UniProtKB-UniRule"/>
</dbReference>
<dbReference type="GO" id="GO:0009099">
    <property type="term" value="P:L-valine biosynthetic process"/>
    <property type="evidence" value="ECO:0007669"/>
    <property type="project" value="UniProtKB-UniRule"/>
</dbReference>
<dbReference type="FunFam" id="3.50.30.80:FF:000001">
    <property type="entry name" value="Dihydroxy-acid dehydratase"/>
    <property type="match status" value="1"/>
</dbReference>
<dbReference type="Gene3D" id="3.50.30.80">
    <property type="entry name" value="IlvD/EDD C-terminal domain-like"/>
    <property type="match status" value="1"/>
</dbReference>
<dbReference type="HAMAP" id="MF_00012">
    <property type="entry name" value="IlvD"/>
    <property type="match status" value="1"/>
</dbReference>
<dbReference type="InterPro" id="IPR042096">
    <property type="entry name" value="Dihydro-acid_dehy_C"/>
</dbReference>
<dbReference type="InterPro" id="IPR004404">
    <property type="entry name" value="DihydroxyA_deHydtase"/>
</dbReference>
<dbReference type="InterPro" id="IPR020558">
    <property type="entry name" value="DiOHA_6PGluconate_deHydtase_CS"/>
</dbReference>
<dbReference type="InterPro" id="IPR056740">
    <property type="entry name" value="ILV_EDD_C"/>
</dbReference>
<dbReference type="InterPro" id="IPR000581">
    <property type="entry name" value="ILV_EDD_N"/>
</dbReference>
<dbReference type="InterPro" id="IPR037237">
    <property type="entry name" value="IlvD/EDD_N"/>
</dbReference>
<dbReference type="NCBIfam" id="TIGR00110">
    <property type="entry name" value="ilvD"/>
    <property type="match status" value="1"/>
</dbReference>
<dbReference type="NCBIfam" id="NF002068">
    <property type="entry name" value="PRK00911.1"/>
    <property type="match status" value="1"/>
</dbReference>
<dbReference type="PANTHER" id="PTHR43661">
    <property type="entry name" value="D-XYLONATE DEHYDRATASE"/>
    <property type="match status" value="1"/>
</dbReference>
<dbReference type="PANTHER" id="PTHR43661:SF3">
    <property type="entry name" value="D-XYLONATE DEHYDRATASE YAGF-RELATED"/>
    <property type="match status" value="1"/>
</dbReference>
<dbReference type="Pfam" id="PF24877">
    <property type="entry name" value="ILV_EDD_C"/>
    <property type="match status" value="1"/>
</dbReference>
<dbReference type="Pfam" id="PF00920">
    <property type="entry name" value="ILVD_EDD_N"/>
    <property type="match status" value="1"/>
</dbReference>
<dbReference type="SUPFAM" id="SSF143975">
    <property type="entry name" value="IlvD/EDD N-terminal domain-like"/>
    <property type="match status" value="1"/>
</dbReference>
<dbReference type="SUPFAM" id="SSF52016">
    <property type="entry name" value="LeuD/IlvD-like"/>
    <property type="match status" value="1"/>
</dbReference>
<dbReference type="PROSITE" id="PS00886">
    <property type="entry name" value="ILVD_EDD_1"/>
    <property type="match status" value="1"/>
</dbReference>
<dbReference type="PROSITE" id="PS00887">
    <property type="entry name" value="ILVD_EDD_2"/>
    <property type="match status" value="1"/>
</dbReference>
<organism>
    <name type="scientific">Pelodictyon phaeoclathratiforme (strain DSM 5477 / BU-1)</name>
    <dbReference type="NCBI Taxonomy" id="324925"/>
    <lineage>
        <taxon>Bacteria</taxon>
        <taxon>Pseudomonadati</taxon>
        <taxon>Chlorobiota</taxon>
        <taxon>Chlorobiia</taxon>
        <taxon>Chlorobiales</taxon>
        <taxon>Chlorobiaceae</taxon>
        <taxon>Chlorobium/Pelodictyon group</taxon>
        <taxon>Pelodictyon</taxon>
    </lineage>
</organism>
<reference key="1">
    <citation type="submission" date="2008-06" db="EMBL/GenBank/DDBJ databases">
        <title>Complete sequence of Pelodictyon phaeoclathratiforme BU-1.</title>
        <authorList>
            <consortium name="US DOE Joint Genome Institute"/>
            <person name="Lucas S."/>
            <person name="Copeland A."/>
            <person name="Lapidus A."/>
            <person name="Glavina del Rio T."/>
            <person name="Dalin E."/>
            <person name="Tice H."/>
            <person name="Bruce D."/>
            <person name="Goodwin L."/>
            <person name="Pitluck S."/>
            <person name="Schmutz J."/>
            <person name="Larimer F."/>
            <person name="Land M."/>
            <person name="Hauser L."/>
            <person name="Kyrpides N."/>
            <person name="Mikhailova N."/>
            <person name="Liu Z."/>
            <person name="Li T."/>
            <person name="Zhao F."/>
            <person name="Overmann J."/>
            <person name="Bryant D.A."/>
            <person name="Richardson P."/>
        </authorList>
    </citation>
    <scope>NUCLEOTIDE SEQUENCE [LARGE SCALE GENOMIC DNA]</scope>
    <source>
        <strain>DSM 5477 / BU-1</strain>
    </source>
</reference>
<name>ILVD_PELPB</name>